<keyword id="KW-0687">Ribonucleoprotein</keyword>
<keyword id="KW-0689">Ribosomal protein</keyword>
<keyword id="KW-0694">RNA-binding</keyword>
<keyword id="KW-0699">rRNA-binding</keyword>
<gene>
    <name evidence="1" type="primary">rpsN</name>
    <name type="ordered locus">RrIowa_1184</name>
</gene>
<accession>B0BUP7</accession>
<protein>
    <recommendedName>
        <fullName evidence="1">Small ribosomal subunit protein uS14</fullName>
    </recommendedName>
    <alternativeName>
        <fullName evidence="3">30S ribosomal protein S14</fullName>
    </alternativeName>
</protein>
<proteinExistence type="inferred from homology"/>
<feature type="chain" id="PRO_1000128549" description="Small ribosomal subunit protein uS14">
    <location>
        <begin position="1"/>
        <end position="101"/>
    </location>
</feature>
<feature type="region of interest" description="Disordered" evidence="2">
    <location>
        <begin position="1"/>
        <end position="22"/>
    </location>
</feature>
<feature type="compositionally biased region" description="Basic residues" evidence="2">
    <location>
        <begin position="11"/>
        <end position="22"/>
    </location>
</feature>
<comment type="function">
    <text evidence="1">Binds 16S rRNA, required for the assembly of 30S particles and may also be responsible for determining the conformation of the 16S rRNA at the A site.</text>
</comment>
<comment type="subunit">
    <text evidence="1">Part of the 30S ribosomal subunit. Contacts proteins S3 and S10.</text>
</comment>
<comment type="similarity">
    <text evidence="1">Belongs to the universal ribosomal protein uS14 family.</text>
</comment>
<reference key="1">
    <citation type="journal article" date="2008" name="Infect. Immun.">
        <title>Genomic comparison of virulent Rickettsia rickettsii Sheila Smith and avirulent Rickettsia rickettsii Iowa.</title>
        <authorList>
            <person name="Ellison D.W."/>
            <person name="Clark T.R."/>
            <person name="Sturdevant D.E."/>
            <person name="Virtaneva K."/>
            <person name="Porcella S.F."/>
            <person name="Hackstadt T."/>
        </authorList>
    </citation>
    <scope>NUCLEOTIDE SEQUENCE [LARGE SCALE GENOMIC DNA]</scope>
    <source>
        <strain>Iowa</strain>
    </source>
</reference>
<sequence>MAKVSSIKKNESRKKKSQSLHNKRLALKSKIYDKNISLEERFSLVMSLAQLPRNSSSTRIRNRCELTGRPRGVTRKFGISRNKLRELIGRGLVPGVVKSSW</sequence>
<organism>
    <name type="scientific">Rickettsia rickettsii (strain Iowa)</name>
    <dbReference type="NCBI Taxonomy" id="452659"/>
    <lineage>
        <taxon>Bacteria</taxon>
        <taxon>Pseudomonadati</taxon>
        <taxon>Pseudomonadota</taxon>
        <taxon>Alphaproteobacteria</taxon>
        <taxon>Rickettsiales</taxon>
        <taxon>Rickettsiaceae</taxon>
        <taxon>Rickettsieae</taxon>
        <taxon>Rickettsia</taxon>
        <taxon>spotted fever group</taxon>
    </lineage>
</organism>
<evidence type="ECO:0000255" key="1">
    <source>
        <dbReference type="HAMAP-Rule" id="MF_00537"/>
    </source>
</evidence>
<evidence type="ECO:0000256" key="2">
    <source>
        <dbReference type="SAM" id="MobiDB-lite"/>
    </source>
</evidence>
<evidence type="ECO:0000305" key="3"/>
<dbReference type="EMBL" id="CP000766">
    <property type="protein sequence ID" value="ABY72957.1"/>
    <property type="molecule type" value="Genomic_DNA"/>
</dbReference>
<dbReference type="RefSeq" id="WP_008580947.1">
    <property type="nucleotide sequence ID" value="NC_010263.3"/>
</dbReference>
<dbReference type="SMR" id="B0BUP7"/>
<dbReference type="GeneID" id="928139"/>
<dbReference type="KEGG" id="rrj:RrIowa_1184"/>
<dbReference type="eggNOG" id="COG0199">
    <property type="taxonomic scope" value="Bacteria"/>
</dbReference>
<dbReference type="HOGENOM" id="CLU_139869_0_1_5"/>
<dbReference type="Proteomes" id="UP000000796">
    <property type="component" value="Chromosome"/>
</dbReference>
<dbReference type="GO" id="GO:0005737">
    <property type="term" value="C:cytoplasm"/>
    <property type="evidence" value="ECO:0007669"/>
    <property type="project" value="UniProtKB-ARBA"/>
</dbReference>
<dbReference type="GO" id="GO:0015935">
    <property type="term" value="C:small ribosomal subunit"/>
    <property type="evidence" value="ECO:0007669"/>
    <property type="project" value="TreeGrafter"/>
</dbReference>
<dbReference type="GO" id="GO:0019843">
    <property type="term" value="F:rRNA binding"/>
    <property type="evidence" value="ECO:0007669"/>
    <property type="project" value="UniProtKB-UniRule"/>
</dbReference>
<dbReference type="GO" id="GO:0003735">
    <property type="term" value="F:structural constituent of ribosome"/>
    <property type="evidence" value="ECO:0007669"/>
    <property type="project" value="InterPro"/>
</dbReference>
<dbReference type="GO" id="GO:0006412">
    <property type="term" value="P:translation"/>
    <property type="evidence" value="ECO:0007669"/>
    <property type="project" value="UniProtKB-UniRule"/>
</dbReference>
<dbReference type="FunFam" id="1.10.287.1480:FF:000001">
    <property type="entry name" value="30S ribosomal protein S14"/>
    <property type="match status" value="1"/>
</dbReference>
<dbReference type="Gene3D" id="1.10.287.1480">
    <property type="match status" value="1"/>
</dbReference>
<dbReference type="HAMAP" id="MF_00537">
    <property type="entry name" value="Ribosomal_uS14_1"/>
    <property type="match status" value="1"/>
</dbReference>
<dbReference type="InterPro" id="IPR001209">
    <property type="entry name" value="Ribosomal_uS14"/>
</dbReference>
<dbReference type="InterPro" id="IPR023036">
    <property type="entry name" value="Ribosomal_uS14_bac/plastid"/>
</dbReference>
<dbReference type="InterPro" id="IPR018271">
    <property type="entry name" value="Ribosomal_uS14_CS"/>
</dbReference>
<dbReference type="NCBIfam" id="NF006477">
    <property type="entry name" value="PRK08881.1"/>
    <property type="match status" value="1"/>
</dbReference>
<dbReference type="PANTHER" id="PTHR19836">
    <property type="entry name" value="30S RIBOSOMAL PROTEIN S14"/>
    <property type="match status" value="1"/>
</dbReference>
<dbReference type="PANTHER" id="PTHR19836:SF19">
    <property type="entry name" value="SMALL RIBOSOMAL SUBUNIT PROTEIN US14M"/>
    <property type="match status" value="1"/>
</dbReference>
<dbReference type="Pfam" id="PF00253">
    <property type="entry name" value="Ribosomal_S14"/>
    <property type="match status" value="1"/>
</dbReference>
<dbReference type="SUPFAM" id="SSF57716">
    <property type="entry name" value="Glucocorticoid receptor-like (DNA-binding domain)"/>
    <property type="match status" value="1"/>
</dbReference>
<dbReference type="PROSITE" id="PS00527">
    <property type="entry name" value="RIBOSOMAL_S14"/>
    <property type="match status" value="1"/>
</dbReference>
<name>RS14_RICRO</name>